<protein>
    <recommendedName>
        <fullName evidence="1">Autonomous glycyl radical cofactor</fullName>
    </recommendedName>
</protein>
<sequence>MIKGIQITQAANDSLLNSFWLLDSDKGEARCLAAKSGFAEDQVVAVSELGQFEYRELPLDVQPSVKVEGGQHLNVNVLRRETLEDAVKHPENYPQLTIRVSGYAVRFNSLTPEQQRDVITRTFTESL</sequence>
<evidence type="ECO:0000255" key="1">
    <source>
        <dbReference type="HAMAP-Rule" id="MF_00806"/>
    </source>
</evidence>
<organism>
    <name type="scientific">Actinobacillus succinogenes (strain ATCC 55618 / DSM 22257 / CCUG 43843 / 130Z)</name>
    <dbReference type="NCBI Taxonomy" id="339671"/>
    <lineage>
        <taxon>Bacteria</taxon>
        <taxon>Pseudomonadati</taxon>
        <taxon>Pseudomonadota</taxon>
        <taxon>Gammaproteobacteria</taxon>
        <taxon>Pasteurellales</taxon>
        <taxon>Pasteurellaceae</taxon>
        <taxon>Actinobacillus</taxon>
    </lineage>
</organism>
<accession>A6VLV5</accession>
<proteinExistence type="inferred from homology"/>
<dbReference type="EMBL" id="CP000746">
    <property type="protein sequence ID" value="ABR73952.1"/>
    <property type="molecule type" value="Genomic_DNA"/>
</dbReference>
<dbReference type="RefSeq" id="WP_012072332.1">
    <property type="nucleotide sequence ID" value="NC_009655.1"/>
</dbReference>
<dbReference type="SMR" id="A6VLV5"/>
<dbReference type="STRING" id="339671.Asuc_0577"/>
<dbReference type="KEGG" id="asu:Asuc_0577"/>
<dbReference type="eggNOG" id="COG3445">
    <property type="taxonomic scope" value="Bacteria"/>
</dbReference>
<dbReference type="HOGENOM" id="CLU_133780_0_0_6"/>
<dbReference type="OrthoDB" id="9803969at2"/>
<dbReference type="Proteomes" id="UP000001114">
    <property type="component" value="Chromosome"/>
</dbReference>
<dbReference type="GO" id="GO:0005829">
    <property type="term" value="C:cytosol"/>
    <property type="evidence" value="ECO:0007669"/>
    <property type="project" value="TreeGrafter"/>
</dbReference>
<dbReference type="GO" id="GO:0008861">
    <property type="term" value="F:formate C-acetyltransferase activity"/>
    <property type="evidence" value="ECO:0007669"/>
    <property type="project" value="TreeGrafter"/>
</dbReference>
<dbReference type="FunFam" id="3.20.70.20:FF:000002">
    <property type="entry name" value="Autonomous glycyl radical cofactor"/>
    <property type="match status" value="1"/>
</dbReference>
<dbReference type="Gene3D" id="3.20.70.20">
    <property type="match status" value="1"/>
</dbReference>
<dbReference type="HAMAP" id="MF_00806">
    <property type="entry name" value="GrcA"/>
    <property type="match status" value="1"/>
</dbReference>
<dbReference type="InterPro" id="IPR050244">
    <property type="entry name" value="Auton_GlycylRad_Cofactor"/>
</dbReference>
<dbReference type="InterPro" id="IPR019777">
    <property type="entry name" value="Form_AcTrfase_GR_CS"/>
</dbReference>
<dbReference type="InterPro" id="IPR001150">
    <property type="entry name" value="Gly_radical"/>
</dbReference>
<dbReference type="InterPro" id="IPR011140">
    <property type="entry name" value="Glycyl_radical_cofactor_GrcA"/>
</dbReference>
<dbReference type="NCBIfam" id="TIGR04365">
    <property type="entry name" value="spare_glycyl"/>
    <property type="match status" value="1"/>
</dbReference>
<dbReference type="PANTHER" id="PTHR30191">
    <property type="entry name" value="FORMATE ACETYLTRANSFERASE"/>
    <property type="match status" value="1"/>
</dbReference>
<dbReference type="PANTHER" id="PTHR30191:SF0">
    <property type="entry name" value="FORMATE ACETYLTRANSFERASE 1"/>
    <property type="match status" value="1"/>
</dbReference>
<dbReference type="Pfam" id="PF01228">
    <property type="entry name" value="Gly_radical"/>
    <property type="match status" value="1"/>
</dbReference>
<dbReference type="PIRSF" id="PIRSF000378">
    <property type="entry name" value="Gly_radicl_yfiD"/>
    <property type="match status" value="1"/>
</dbReference>
<dbReference type="SUPFAM" id="SSF51998">
    <property type="entry name" value="PFL-like glycyl radical enzymes"/>
    <property type="match status" value="1"/>
</dbReference>
<dbReference type="PROSITE" id="PS00850">
    <property type="entry name" value="GLY_RADICAL_1"/>
    <property type="match status" value="1"/>
</dbReference>
<dbReference type="PROSITE" id="PS51149">
    <property type="entry name" value="GLY_RADICAL_2"/>
    <property type="match status" value="1"/>
</dbReference>
<feature type="chain" id="PRO_1000083714" description="Autonomous glycyl radical cofactor">
    <location>
        <begin position="1"/>
        <end position="127"/>
    </location>
</feature>
<feature type="domain" description="Glycine radical" evidence="1">
    <location>
        <begin position="5"/>
        <end position="127"/>
    </location>
</feature>
<feature type="modified residue" description="Glycine radical" evidence="1">
    <location>
        <position position="102"/>
    </location>
</feature>
<reference key="1">
    <citation type="journal article" date="2010" name="BMC Genomics">
        <title>A genomic perspective on the potential of Actinobacillus succinogenes for industrial succinate production.</title>
        <authorList>
            <person name="McKinlay J.B."/>
            <person name="Laivenieks M."/>
            <person name="Schindler B.D."/>
            <person name="McKinlay A.A."/>
            <person name="Siddaramappa S."/>
            <person name="Challacombe J.F."/>
            <person name="Lowry S.R."/>
            <person name="Clum A."/>
            <person name="Lapidus A.L."/>
            <person name="Burkhart K.B."/>
            <person name="Harkins V."/>
            <person name="Vieille C."/>
        </authorList>
    </citation>
    <scope>NUCLEOTIDE SEQUENCE [LARGE SCALE GENOMIC DNA]</scope>
    <source>
        <strain>ATCC 55618 / DSM 22257 / CCUG 43843 / 130Z</strain>
    </source>
</reference>
<comment type="function">
    <text evidence="1">Acts as a radical domain for damaged PFL and possibly other radical proteins.</text>
</comment>
<name>GRCA_ACTSZ</name>
<keyword id="KW-0556">Organic radical</keyword>
<keyword id="KW-1185">Reference proteome</keyword>
<gene>
    <name evidence="1" type="primary">grcA</name>
    <name type="ordered locus">Asuc_0577</name>
</gene>